<keyword id="KW-0175">Coiled coil</keyword>
<keyword id="KW-0963">Cytoplasm</keyword>
<keyword id="KW-0254">Endocytosis</keyword>
<keyword id="KW-0472">Membrane</keyword>
<keyword id="KW-0597">Phosphoprotein</keyword>
<keyword id="KW-0728">SH3 domain</keyword>
<gene>
    <name evidence="1" type="primary">EndoA</name>
    <name type="ORF">GG23082</name>
</gene>
<comment type="function">
    <text evidence="1">Required presynaptically at the neuromuscular junction. Implicated in synaptic vesicle endocytosis.</text>
</comment>
<comment type="subcellular location">
    <subcellularLocation>
        <location evidence="1">Cytoplasm</location>
    </subcellularLocation>
    <subcellularLocation>
        <location evidence="1">Membrane</location>
        <topology evidence="1">Peripheral membrane protein</topology>
    </subcellularLocation>
    <text evidence="1">Associated with internal membranes. Expressed presynaptically at NMJs.</text>
</comment>
<comment type="similarity">
    <text evidence="2">Belongs to the endophilin family.</text>
</comment>
<evidence type="ECO:0000250" key="1">
    <source>
        <dbReference type="UniProtKB" id="Q8T390"/>
    </source>
</evidence>
<evidence type="ECO:0000255" key="2"/>
<evidence type="ECO:0000255" key="3">
    <source>
        <dbReference type="PROSITE-ProRule" id="PRU00192"/>
    </source>
</evidence>
<evidence type="ECO:0000255" key="4">
    <source>
        <dbReference type="PROSITE-ProRule" id="PRU00361"/>
    </source>
</evidence>
<evidence type="ECO:0000256" key="5">
    <source>
        <dbReference type="SAM" id="MobiDB-lite"/>
    </source>
</evidence>
<evidence type="ECO:0000312" key="6">
    <source>
        <dbReference type="EMBL" id="AAO00984.1"/>
    </source>
</evidence>
<sequence length="369" mass="41409">MAFAGLKKQINKANQYMTEKMGGAEGTKLDMDFMEMERKTDVTVELVEELQLKTKEFLQPNPTARAKMAAVKGISKLSGQAKSNTYPQPEGLLAECMLTYGKKLGEDNSVFAQALVEFGEALKQMADVKYSLDDNIKQNFLEPLHHMQTKDLKEVMHHRKKLQGRRLDFDCKRRRQAKDDEIRGAEDKFGESLQLAQVGMFNLLENDTEHVSQLVTFAEALYDFHSQCADVLRGLQETLQEKRSEAESRPRNEFVPKTLLDLNLDGGGGGLNEDGTPSHISSSASPLPSPMRSPAKSMAVTPQRQQQPCCQALYDFEPENPGELAFKENDIITLLNRVDDNWFEGAVNGRTGYFPQSYVQVQVPLPNGN</sequence>
<dbReference type="EMBL" id="AY190935">
    <property type="protein sequence ID" value="AAO00984.1"/>
    <property type="molecule type" value="Genomic_DNA"/>
</dbReference>
<dbReference type="EMBL" id="CH954181">
    <property type="protein sequence ID" value="EDV48549.1"/>
    <property type="molecule type" value="Genomic_DNA"/>
</dbReference>
<dbReference type="SMR" id="Q8I1I3"/>
<dbReference type="EnsemblMetazoa" id="FBtr0143136">
    <property type="protein sequence ID" value="FBpp0141628"/>
    <property type="gene ID" value="FBgn0064606"/>
</dbReference>
<dbReference type="EnsemblMetazoa" id="XM_001979555.3">
    <property type="protein sequence ID" value="XP_001979591.1"/>
    <property type="gene ID" value="LOC6553880"/>
</dbReference>
<dbReference type="GeneID" id="6553880"/>
<dbReference type="KEGG" id="der:6553880"/>
<dbReference type="CTD" id="42265"/>
<dbReference type="eggNOG" id="KOG1118">
    <property type="taxonomic scope" value="Eukaryota"/>
</dbReference>
<dbReference type="HOGENOM" id="CLU_047887_0_0_1"/>
<dbReference type="OMA" id="MFPANYC"/>
<dbReference type="OrthoDB" id="443981at2759"/>
<dbReference type="PhylomeDB" id="Q8I1I3"/>
<dbReference type="Proteomes" id="UP000008711">
    <property type="component" value="Unassembled WGS sequence"/>
</dbReference>
<dbReference type="GO" id="GO:0005737">
    <property type="term" value="C:cytoplasm"/>
    <property type="evidence" value="ECO:0000250"/>
    <property type="project" value="UniProtKB"/>
</dbReference>
<dbReference type="GO" id="GO:0005829">
    <property type="term" value="C:cytosol"/>
    <property type="evidence" value="ECO:0007669"/>
    <property type="project" value="EnsemblMetazoa"/>
</dbReference>
<dbReference type="GO" id="GO:0098978">
    <property type="term" value="C:glutamatergic synapse"/>
    <property type="evidence" value="ECO:0007669"/>
    <property type="project" value="TreeGrafter"/>
</dbReference>
<dbReference type="GO" id="GO:0016020">
    <property type="term" value="C:membrane"/>
    <property type="evidence" value="ECO:0007669"/>
    <property type="project" value="UniProtKB-SubCell"/>
</dbReference>
<dbReference type="GO" id="GO:0061174">
    <property type="term" value="C:type I terminal bouton"/>
    <property type="evidence" value="ECO:0007669"/>
    <property type="project" value="EnsemblMetazoa"/>
</dbReference>
<dbReference type="GO" id="GO:0005543">
    <property type="term" value="F:phospholipid binding"/>
    <property type="evidence" value="ECO:0007669"/>
    <property type="project" value="EnsemblMetazoa"/>
</dbReference>
<dbReference type="GO" id="GO:0000045">
    <property type="term" value="P:autophagosome assembly"/>
    <property type="evidence" value="ECO:0007669"/>
    <property type="project" value="EnsemblMetazoa"/>
</dbReference>
<dbReference type="GO" id="GO:0009267">
    <property type="term" value="P:cellular response to starvation"/>
    <property type="evidence" value="ECO:0007669"/>
    <property type="project" value="EnsemblMetazoa"/>
</dbReference>
<dbReference type="GO" id="GO:0150007">
    <property type="term" value="P:clathrin-dependent synaptic vesicle endocytosis"/>
    <property type="evidence" value="ECO:0007669"/>
    <property type="project" value="EnsemblMetazoa"/>
</dbReference>
<dbReference type="GO" id="GO:0097753">
    <property type="term" value="P:membrane bending"/>
    <property type="evidence" value="ECO:0007669"/>
    <property type="project" value="EnsemblMetazoa"/>
</dbReference>
<dbReference type="GO" id="GO:0097749">
    <property type="term" value="P:membrane tubulation"/>
    <property type="evidence" value="ECO:0007669"/>
    <property type="project" value="EnsemblMetazoa"/>
</dbReference>
<dbReference type="GO" id="GO:0097320">
    <property type="term" value="P:plasma membrane tubulation"/>
    <property type="evidence" value="ECO:0007669"/>
    <property type="project" value="EnsemblMetazoa"/>
</dbReference>
<dbReference type="GO" id="GO:0050803">
    <property type="term" value="P:regulation of synapse structure or activity"/>
    <property type="evidence" value="ECO:0000250"/>
    <property type="project" value="UniProtKB"/>
</dbReference>
<dbReference type="GO" id="GO:0048488">
    <property type="term" value="P:synaptic vesicle endocytosis"/>
    <property type="evidence" value="ECO:0000250"/>
    <property type="project" value="UniProtKB"/>
</dbReference>
<dbReference type="GO" id="GO:0016191">
    <property type="term" value="P:synaptic vesicle uncoating"/>
    <property type="evidence" value="ECO:0007669"/>
    <property type="project" value="TreeGrafter"/>
</dbReference>
<dbReference type="CDD" id="cd07592">
    <property type="entry name" value="BAR_Endophilin_A"/>
    <property type="match status" value="1"/>
</dbReference>
<dbReference type="CDD" id="cd11803">
    <property type="entry name" value="SH3_Endophilin_A"/>
    <property type="match status" value="1"/>
</dbReference>
<dbReference type="FunFam" id="1.20.1270.60:FF:000021">
    <property type="entry name" value="Endophilin-A2 isoform 1"/>
    <property type="match status" value="1"/>
</dbReference>
<dbReference type="FunFam" id="2.30.30.40:FF:000072">
    <property type="entry name" value="Unconventional Myosin IB"/>
    <property type="match status" value="1"/>
</dbReference>
<dbReference type="Gene3D" id="1.20.1270.60">
    <property type="entry name" value="Arfaptin homology (AH) domain/BAR domain"/>
    <property type="match status" value="1"/>
</dbReference>
<dbReference type="Gene3D" id="2.30.30.40">
    <property type="entry name" value="SH3 Domains"/>
    <property type="match status" value="1"/>
</dbReference>
<dbReference type="InterPro" id="IPR027267">
    <property type="entry name" value="AH/BAR_dom_sf"/>
</dbReference>
<dbReference type="InterPro" id="IPR004148">
    <property type="entry name" value="BAR_dom"/>
</dbReference>
<dbReference type="InterPro" id="IPR035824">
    <property type="entry name" value="Endophilin_A_SH3"/>
</dbReference>
<dbReference type="InterPro" id="IPR050384">
    <property type="entry name" value="Endophilin_SH3RF"/>
</dbReference>
<dbReference type="InterPro" id="IPR036028">
    <property type="entry name" value="SH3-like_dom_sf"/>
</dbReference>
<dbReference type="InterPro" id="IPR001452">
    <property type="entry name" value="SH3_domain"/>
</dbReference>
<dbReference type="PANTHER" id="PTHR14167:SF81">
    <property type="entry name" value="ENDOPHILIN-A"/>
    <property type="match status" value="1"/>
</dbReference>
<dbReference type="PANTHER" id="PTHR14167">
    <property type="entry name" value="SH3 DOMAIN-CONTAINING"/>
    <property type="match status" value="1"/>
</dbReference>
<dbReference type="Pfam" id="PF03114">
    <property type="entry name" value="BAR"/>
    <property type="match status" value="1"/>
</dbReference>
<dbReference type="Pfam" id="PF00018">
    <property type="entry name" value="SH3_1"/>
    <property type="match status" value="1"/>
</dbReference>
<dbReference type="PRINTS" id="PR00452">
    <property type="entry name" value="SH3DOMAIN"/>
</dbReference>
<dbReference type="PRINTS" id="PR01887">
    <property type="entry name" value="SPECTRNALPHA"/>
</dbReference>
<dbReference type="SMART" id="SM00721">
    <property type="entry name" value="BAR"/>
    <property type="match status" value="1"/>
</dbReference>
<dbReference type="SMART" id="SM00326">
    <property type="entry name" value="SH3"/>
    <property type="match status" value="1"/>
</dbReference>
<dbReference type="SUPFAM" id="SSF103657">
    <property type="entry name" value="BAR/IMD domain-like"/>
    <property type="match status" value="1"/>
</dbReference>
<dbReference type="SUPFAM" id="SSF50044">
    <property type="entry name" value="SH3-domain"/>
    <property type="match status" value="1"/>
</dbReference>
<dbReference type="PROSITE" id="PS51021">
    <property type="entry name" value="BAR"/>
    <property type="match status" value="1"/>
</dbReference>
<dbReference type="PROSITE" id="PS50002">
    <property type="entry name" value="SH3"/>
    <property type="match status" value="1"/>
</dbReference>
<organism>
    <name type="scientific">Drosophila erecta</name>
    <name type="common">Fruit fly</name>
    <dbReference type="NCBI Taxonomy" id="7220"/>
    <lineage>
        <taxon>Eukaryota</taxon>
        <taxon>Metazoa</taxon>
        <taxon>Ecdysozoa</taxon>
        <taxon>Arthropoda</taxon>
        <taxon>Hexapoda</taxon>
        <taxon>Insecta</taxon>
        <taxon>Pterygota</taxon>
        <taxon>Neoptera</taxon>
        <taxon>Endopterygota</taxon>
        <taxon>Diptera</taxon>
        <taxon>Brachycera</taxon>
        <taxon>Muscomorpha</taxon>
        <taxon>Ephydroidea</taxon>
        <taxon>Drosophilidae</taxon>
        <taxon>Drosophila</taxon>
        <taxon>Sophophora</taxon>
    </lineage>
</organism>
<name>SH3G3_DROER</name>
<reference evidence="6" key="1">
    <citation type="journal article" date="2002" name="Genome Biol.">
        <title>Assessing the impact of comparative genomic sequence data on the functional annotation of the Drosophila genome.</title>
        <authorList>
            <person name="Bergman C.M."/>
            <person name="Pfeiffer B.D."/>
            <person name="Rincon-Limas D.E."/>
            <person name="Hoskins R.A."/>
            <person name="Gnirke A."/>
            <person name="Mungall C.J."/>
            <person name="Wang A.M."/>
            <person name="Kronmiller B."/>
            <person name="Pacleb J.M."/>
            <person name="Park S."/>
            <person name="Stapleton M."/>
            <person name="Wan K.H."/>
            <person name="George R.A."/>
            <person name="de Jong P.J."/>
            <person name="Botas J."/>
            <person name="Rubin G.M."/>
            <person name="Celniker S.E."/>
        </authorList>
    </citation>
    <scope>NUCLEOTIDE SEQUENCE [LARGE SCALE GENOMIC DNA]</scope>
    <source>
        <strain evidence="6">Tucson 14021-0224.0</strain>
    </source>
</reference>
<reference key="2">
    <citation type="journal article" date="2007" name="Nature">
        <title>Evolution of genes and genomes on the Drosophila phylogeny.</title>
        <authorList>
            <consortium name="Drosophila 12 genomes consortium"/>
        </authorList>
    </citation>
    <scope>NUCLEOTIDE SEQUENCE [LARGE SCALE GENOMIC DNA]</scope>
    <source>
        <strain>Tucson 14021-0224.01</strain>
    </source>
</reference>
<feature type="chain" id="PRO_0000285837" description="Endophilin-A">
    <location>
        <begin position="1"/>
        <end position="369"/>
    </location>
</feature>
<feature type="domain" description="BAR" evidence="4">
    <location>
        <begin position="18"/>
        <end position="248"/>
    </location>
</feature>
<feature type="domain" description="SH3" evidence="3">
    <location>
        <begin position="305"/>
        <end position="364"/>
    </location>
</feature>
<feature type="region of interest" description="Disordered" evidence="5">
    <location>
        <begin position="266"/>
        <end position="295"/>
    </location>
</feature>
<feature type="coiled-coil region" evidence="2">
    <location>
        <begin position="227"/>
        <end position="247"/>
    </location>
</feature>
<feature type="compositionally biased region" description="Low complexity" evidence="5">
    <location>
        <begin position="277"/>
        <end position="294"/>
    </location>
</feature>
<protein>
    <recommendedName>
        <fullName>Endophilin-A</fullName>
    </recommendedName>
    <alternativeName>
        <fullName>SH3 domain-containing GRB2-like protein</fullName>
    </alternativeName>
</protein>
<accession>Q8I1I3</accession>
<accession>B3P397</accession>
<proteinExistence type="inferred from homology"/>